<name>SUB4_ARTGP</name>
<organism>
    <name type="scientific">Arthroderma gypseum (strain ATCC MYA-4604 / CBS 118893)</name>
    <name type="common">Microsporum gypseum</name>
    <dbReference type="NCBI Taxonomy" id="535722"/>
    <lineage>
        <taxon>Eukaryota</taxon>
        <taxon>Fungi</taxon>
        <taxon>Dikarya</taxon>
        <taxon>Ascomycota</taxon>
        <taxon>Pezizomycotina</taxon>
        <taxon>Eurotiomycetes</taxon>
        <taxon>Eurotiomycetidae</taxon>
        <taxon>Onygenales</taxon>
        <taxon>Arthrodermataceae</taxon>
        <taxon>Nannizzia</taxon>
    </lineage>
</organism>
<feature type="signal peptide" evidence="2">
    <location>
        <begin position="1"/>
        <end position="19"/>
    </location>
</feature>
<feature type="propeptide" id="PRO_0000406370" evidence="1">
    <location>
        <begin position="20"/>
        <end position="118"/>
    </location>
</feature>
<feature type="chain" id="PRO_0000406371" description="Subtilisin-like protease 4">
    <location>
        <begin position="119"/>
        <end position="399"/>
    </location>
</feature>
<feature type="domain" description="Inhibitor I9" evidence="2">
    <location>
        <begin position="38"/>
        <end position="117"/>
    </location>
</feature>
<feature type="domain" description="Peptidase S8" evidence="3">
    <location>
        <begin position="128"/>
        <end position="399"/>
    </location>
</feature>
<feature type="region of interest" description="Disordered" evidence="4">
    <location>
        <begin position="380"/>
        <end position="399"/>
    </location>
</feature>
<feature type="compositionally biased region" description="Polar residues" evidence="4">
    <location>
        <begin position="380"/>
        <end position="392"/>
    </location>
</feature>
<feature type="active site" description="Charge relay system" evidence="3">
    <location>
        <position position="160"/>
    </location>
</feature>
<feature type="active site" description="Charge relay system" evidence="3">
    <location>
        <position position="191"/>
    </location>
</feature>
<feature type="active site" description="Charge relay system" evidence="3">
    <location>
        <position position="346"/>
    </location>
</feature>
<feature type="glycosylation site" description="N-linked (GlcNAc...) asparagine" evidence="2">
    <location>
        <position position="252"/>
    </location>
</feature>
<feature type="glycosylation site" description="N-linked (GlcNAc...) asparagine" evidence="2">
    <location>
        <position position="395"/>
    </location>
</feature>
<evidence type="ECO:0000250" key="1"/>
<evidence type="ECO:0000255" key="2"/>
<evidence type="ECO:0000255" key="3">
    <source>
        <dbReference type="PROSITE-ProRule" id="PRU01240"/>
    </source>
</evidence>
<evidence type="ECO:0000256" key="4">
    <source>
        <dbReference type="SAM" id="MobiDB-lite"/>
    </source>
</evidence>
<evidence type="ECO:0000305" key="5"/>
<accession>E4UWA4</accession>
<sequence length="399" mass="41922">MVCLKTLSVFLAAFAVADARAVFKTQSNKNGEMIADNYIVVMKDGVSHDDFKAHVSSVASIHTTNKAKRGTNTAGMKREFDIMNWRGYHGHFDRDTLEEILNDSKVSYVEQDQVVRISGLTTQRSAPSWGLGRVSHRRAGSRDYVFDDSAGRGVTIYGVDTGIDIRHQDFGGRARWGTNTADRDNADRHGHGTHTASTFAGTAFGIAKNANIVAVKVLGSDGSGSTSGIIAGINYCVQDAQQRGILGKAAMNLSLGGGFSQANNDAVTRAQNAGIFVAVAAGNDNRDARAYSPASAPAVCTVASSTIQDSKSSFSNWGSIVDIYAPGSDIIAARPGGGSQSMSGTSMASPHVAGMGAYLIGMGADPRRVCDQLKQLSTPAISNPGSGTTNRLLYNGSGQ</sequence>
<dbReference type="EC" id="3.4.21.-"/>
<dbReference type="EMBL" id="DS989825">
    <property type="protein sequence ID" value="EFR01712.1"/>
    <property type="molecule type" value="Genomic_DNA"/>
</dbReference>
<dbReference type="RefSeq" id="XP_003172123.1">
    <property type="nucleotide sequence ID" value="XM_003172075.1"/>
</dbReference>
<dbReference type="SMR" id="E4UWA4"/>
<dbReference type="STRING" id="535722.E4UWA4"/>
<dbReference type="GlyCosmos" id="E4UWA4">
    <property type="glycosylation" value="2 sites, No reported glycans"/>
</dbReference>
<dbReference type="GeneID" id="10027391"/>
<dbReference type="VEuPathDB" id="FungiDB:MGYG_04715"/>
<dbReference type="eggNOG" id="KOG1153">
    <property type="taxonomic scope" value="Eukaryota"/>
</dbReference>
<dbReference type="HOGENOM" id="CLU_011263_1_3_1"/>
<dbReference type="InParanoid" id="E4UWA4"/>
<dbReference type="OMA" id="MGAYMIG"/>
<dbReference type="OrthoDB" id="206201at2759"/>
<dbReference type="Proteomes" id="UP000002669">
    <property type="component" value="Unassembled WGS sequence"/>
</dbReference>
<dbReference type="GO" id="GO:0005576">
    <property type="term" value="C:extracellular region"/>
    <property type="evidence" value="ECO:0007669"/>
    <property type="project" value="UniProtKB-SubCell"/>
</dbReference>
<dbReference type="GO" id="GO:0004252">
    <property type="term" value="F:serine-type endopeptidase activity"/>
    <property type="evidence" value="ECO:0007669"/>
    <property type="project" value="InterPro"/>
</dbReference>
<dbReference type="GO" id="GO:0006508">
    <property type="term" value="P:proteolysis"/>
    <property type="evidence" value="ECO:0007669"/>
    <property type="project" value="UniProtKB-KW"/>
</dbReference>
<dbReference type="CDD" id="cd04077">
    <property type="entry name" value="Peptidases_S8_PCSK9_ProteinaseK_like"/>
    <property type="match status" value="1"/>
</dbReference>
<dbReference type="FunFam" id="3.40.50.200:FF:000014">
    <property type="entry name" value="Proteinase K"/>
    <property type="match status" value="1"/>
</dbReference>
<dbReference type="Gene3D" id="3.30.70.80">
    <property type="entry name" value="Peptidase S8 propeptide/proteinase inhibitor I9"/>
    <property type="match status" value="1"/>
</dbReference>
<dbReference type="Gene3D" id="3.40.50.200">
    <property type="entry name" value="Peptidase S8/S53 domain"/>
    <property type="match status" value="1"/>
</dbReference>
<dbReference type="InterPro" id="IPR034193">
    <property type="entry name" value="PCSK9_ProteinaseK-like"/>
</dbReference>
<dbReference type="InterPro" id="IPR000209">
    <property type="entry name" value="Peptidase_S8/S53_dom"/>
</dbReference>
<dbReference type="InterPro" id="IPR036852">
    <property type="entry name" value="Peptidase_S8/S53_dom_sf"/>
</dbReference>
<dbReference type="InterPro" id="IPR023828">
    <property type="entry name" value="Peptidase_S8_Ser-AS"/>
</dbReference>
<dbReference type="InterPro" id="IPR050131">
    <property type="entry name" value="Peptidase_S8_subtilisin-like"/>
</dbReference>
<dbReference type="InterPro" id="IPR015500">
    <property type="entry name" value="Peptidase_S8_subtilisin-rel"/>
</dbReference>
<dbReference type="InterPro" id="IPR010259">
    <property type="entry name" value="S8pro/Inhibitor_I9"/>
</dbReference>
<dbReference type="InterPro" id="IPR037045">
    <property type="entry name" value="S8pro/Inhibitor_I9_sf"/>
</dbReference>
<dbReference type="PANTHER" id="PTHR43806:SF11">
    <property type="entry name" value="CEREVISIN-RELATED"/>
    <property type="match status" value="1"/>
</dbReference>
<dbReference type="PANTHER" id="PTHR43806">
    <property type="entry name" value="PEPTIDASE S8"/>
    <property type="match status" value="1"/>
</dbReference>
<dbReference type="Pfam" id="PF05922">
    <property type="entry name" value="Inhibitor_I9"/>
    <property type="match status" value="1"/>
</dbReference>
<dbReference type="Pfam" id="PF00082">
    <property type="entry name" value="Peptidase_S8"/>
    <property type="match status" value="1"/>
</dbReference>
<dbReference type="PRINTS" id="PR00723">
    <property type="entry name" value="SUBTILISIN"/>
</dbReference>
<dbReference type="SUPFAM" id="SSF54897">
    <property type="entry name" value="Protease propeptides/inhibitors"/>
    <property type="match status" value="1"/>
</dbReference>
<dbReference type="SUPFAM" id="SSF52743">
    <property type="entry name" value="Subtilisin-like"/>
    <property type="match status" value="1"/>
</dbReference>
<dbReference type="PROSITE" id="PS51892">
    <property type="entry name" value="SUBTILASE"/>
    <property type="match status" value="1"/>
</dbReference>
<dbReference type="PROSITE" id="PS00138">
    <property type="entry name" value="SUBTILASE_SER"/>
    <property type="match status" value="1"/>
</dbReference>
<protein>
    <recommendedName>
        <fullName>Subtilisin-like protease 4</fullName>
        <ecNumber>3.4.21.-</ecNumber>
    </recommendedName>
</protein>
<gene>
    <name type="primary">SUB4</name>
    <name type="ORF">MGYG_04715</name>
</gene>
<reference key="1">
    <citation type="journal article" date="2012" name="MBio">
        <title>Comparative genome analysis of Trichophyton rubrum and related dermatophytes reveals candidate genes involved in infection.</title>
        <authorList>
            <person name="Martinez D.A."/>
            <person name="Oliver B.G."/>
            <person name="Graeser Y."/>
            <person name="Goldberg J.M."/>
            <person name="Li W."/>
            <person name="Martinez-Rossi N.M."/>
            <person name="Monod M."/>
            <person name="Shelest E."/>
            <person name="Barton R.C."/>
            <person name="Birch E."/>
            <person name="Brakhage A.A."/>
            <person name="Chen Z."/>
            <person name="Gurr S.J."/>
            <person name="Heiman D."/>
            <person name="Heitman J."/>
            <person name="Kosti I."/>
            <person name="Rossi A."/>
            <person name="Saif S."/>
            <person name="Samalova M."/>
            <person name="Saunders C.W."/>
            <person name="Shea T."/>
            <person name="Summerbell R.C."/>
            <person name="Xu J."/>
            <person name="Young S."/>
            <person name="Zeng Q."/>
            <person name="Birren B.W."/>
            <person name="Cuomo C.A."/>
            <person name="White T.C."/>
        </authorList>
    </citation>
    <scope>NUCLEOTIDE SEQUENCE [LARGE SCALE GENOMIC DNA]</scope>
    <source>
        <strain>ATCC MYA-4604 / CBS 118893</strain>
    </source>
</reference>
<proteinExistence type="inferred from homology"/>
<comment type="function">
    <text evidence="1">Secreted subtilisin-like serine protease with keratinolytic activity that contributes to pathogenicity.</text>
</comment>
<comment type="subcellular location">
    <subcellularLocation>
        <location evidence="1">Secreted</location>
    </subcellularLocation>
</comment>
<comment type="similarity">
    <text evidence="5">Belongs to the peptidase S8 family.</text>
</comment>
<keyword id="KW-0325">Glycoprotein</keyword>
<keyword id="KW-0378">Hydrolase</keyword>
<keyword id="KW-0645">Protease</keyword>
<keyword id="KW-1185">Reference proteome</keyword>
<keyword id="KW-0964">Secreted</keyword>
<keyword id="KW-0720">Serine protease</keyword>
<keyword id="KW-0732">Signal</keyword>
<keyword id="KW-0843">Virulence</keyword>
<keyword id="KW-0865">Zymogen</keyword>